<feature type="chain" id="PRO_1000148547" description="Ribosome biogenesis protein Nop10">
    <location>
        <begin position="1"/>
        <end position="66"/>
    </location>
</feature>
<comment type="function">
    <text evidence="1">Involved in ribosome biogenesis; more specifically in 18S rRNA pseudouridylation and in cleavage of pre-rRNA.</text>
</comment>
<comment type="similarity">
    <text evidence="1">Belongs to the NOP10 family.</text>
</comment>
<proteinExistence type="inferred from homology"/>
<sequence length="66" mass="7813">MNWLLRKCSKCGRYTLSRDRCPYCGGELIVPHPPRFSPIDKYVEYRLEEKLSKGIIKLDEKPPYKP</sequence>
<protein>
    <recommendedName>
        <fullName evidence="1">Ribosome biogenesis protein Nop10</fullName>
    </recommendedName>
</protein>
<name>NOP10_DESA1</name>
<gene>
    <name evidence="1" type="primary">nop10</name>
    <name type="ordered locus">DKAM_1423</name>
</gene>
<keyword id="KW-0687">Ribonucleoprotein</keyword>
<keyword id="KW-0690">Ribosome biogenesis</keyword>
<keyword id="KW-0698">rRNA processing</keyword>
<evidence type="ECO:0000255" key="1">
    <source>
        <dbReference type="HAMAP-Rule" id="MF_00803"/>
    </source>
</evidence>
<dbReference type="EMBL" id="CP001140">
    <property type="protein sequence ID" value="ACL11749.1"/>
    <property type="molecule type" value="Genomic_DNA"/>
</dbReference>
<dbReference type="RefSeq" id="WP_012609090.1">
    <property type="nucleotide sequence ID" value="NC_011766.1"/>
</dbReference>
<dbReference type="SMR" id="B8D6L8"/>
<dbReference type="STRING" id="490899.DKAM_1423"/>
<dbReference type="GeneID" id="7171457"/>
<dbReference type="KEGG" id="dka:DKAM_1423"/>
<dbReference type="eggNOG" id="arCOG00906">
    <property type="taxonomic scope" value="Archaea"/>
</dbReference>
<dbReference type="HOGENOM" id="CLU_196480_0_0_2"/>
<dbReference type="Proteomes" id="UP000006903">
    <property type="component" value="Chromosome"/>
</dbReference>
<dbReference type="GO" id="GO:1990904">
    <property type="term" value="C:ribonucleoprotein complex"/>
    <property type="evidence" value="ECO:0007669"/>
    <property type="project" value="UniProtKB-KW"/>
</dbReference>
<dbReference type="GO" id="GO:0030515">
    <property type="term" value="F:snoRNA binding"/>
    <property type="evidence" value="ECO:0007669"/>
    <property type="project" value="InterPro"/>
</dbReference>
<dbReference type="GO" id="GO:0001522">
    <property type="term" value="P:pseudouridine synthesis"/>
    <property type="evidence" value="ECO:0007669"/>
    <property type="project" value="InterPro"/>
</dbReference>
<dbReference type="GO" id="GO:0006364">
    <property type="term" value="P:rRNA processing"/>
    <property type="evidence" value="ECO:0007669"/>
    <property type="project" value="UniProtKB-UniRule"/>
</dbReference>
<dbReference type="Gene3D" id="2.20.28.40">
    <property type="entry name" value="H/ACA ribonucleoprotein complex, subunit Nop10"/>
    <property type="match status" value="1"/>
</dbReference>
<dbReference type="HAMAP" id="MF_00803">
    <property type="entry name" value="Nop10"/>
    <property type="match status" value="1"/>
</dbReference>
<dbReference type="InterPro" id="IPR007264">
    <property type="entry name" value="H/ACA_rnp_Nop10"/>
</dbReference>
<dbReference type="InterPro" id="IPR036756">
    <property type="entry name" value="H/ACA_rnp_Nop10_sf"/>
</dbReference>
<dbReference type="InterPro" id="IPR023532">
    <property type="entry name" value="Nop10_arc-typ"/>
</dbReference>
<dbReference type="NCBIfam" id="NF009623">
    <property type="entry name" value="PRK13130.1"/>
    <property type="match status" value="1"/>
</dbReference>
<dbReference type="Pfam" id="PF04135">
    <property type="entry name" value="Nop10p"/>
    <property type="match status" value="1"/>
</dbReference>
<dbReference type="SUPFAM" id="SSF144210">
    <property type="entry name" value="Nop10-like SnoRNP"/>
    <property type="match status" value="1"/>
</dbReference>
<accession>B8D6L8</accession>
<reference key="1">
    <citation type="journal article" date="2009" name="J. Bacteriol.">
        <title>Complete genome sequence of the anaerobic, protein-degrading hyperthermophilic crenarchaeon Desulfurococcus kamchatkensis.</title>
        <authorList>
            <person name="Ravin N.V."/>
            <person name="Mardanov A.V."/>
            <person name="Beletsky A.V."/>
            <person name="Kublanov I.V."/>
            <person name="Kolganova T.V."/>
            <person name="Lebedinsky A.V."/>
            <person name="Chernyh N.A."/>
            <person name="Bonch-Osmolovskaya E.A."/>
            <person name="Skryabin K.G."/>
        </authorList>
    </citation>
    <scope>NUCLEOTIDE SEQUENCE [LARGE SCALE GENOMIC DNA]</scope>
    <source>
        <strain>DSM 18924 / JCM 16383 / VKM B-2413 / 1221n</strain>
    </source>
</reference>
<organism>
    <name type="scientific">Desulfurococcus amylolyticus (strain DSM 18924 / JCM 16383 / VKM B-2413 / 1221n)</name>
    <name type="common">Desulfurococcus kamchatkensis</name>
    <dbReference type="NCBI Taxonomy" id="490899"/>
    <lineage>
        <taxon>Archaea</taxon>
        <taxon>Thermoproteota</taxon>
        <taxon>Thermoprotei</taxon>
        <taxon>Desulfurococcales</taxon>
        <taxon>Desulfurococcaceae</taxon>
        <taxon>Desulfurococcus</taxon>
    </lineage>
</organism>